<proteinExistence type="evidence at protein level"/>
<sequence>MKKTATPKLRLLLSNDDGVYAKGLAILAKTLADLGEVDVVAPDRNRSGASNSLTLNAPLHIKNLENGMISVEGTPTDCVHLAITGVLPEMPDMVVAGINAGPNLGDDVWYSGTVAAAMEGRFLGLPALAVSLGGELFRYYETAAKVVYQLIQRIEKDPLPPSTILNINVPDLPYEELKGFEVTRLGTRHRAEPTIRQIDPRGHPIYWVGAAGPEQDSGPGTDFFAMNHHCVSITPLRVDLTHYEAFDQLASWVKRLEM</sequence>
<protein>
    <recommendedName>
        <fullName evidence="1">5'-nucleotidase SurE</fullName>
        <ecNumber evidence="1">3.1.3.5</ecNumber>
    </recommendedName>
    <alternativeName>
        <fullName evidence="1">Nucleoside 5'-monophosphate phosphohydrolase</fullName>
    </alternativeName>
</protein>
<comment type="function">
    <text evidence="1">Nucleotidase that shows phosphatase activity on nucleoside 5'-monophosphates.</text>
</comment>
<comment type="catalytic activity">
    <reaction evidence="1">
        <text>a ribonucleoside 5'-phosphate + H2O = a ribonucleoside + phosphate</text>
        <dbReference type="Rhea" id="RHEA:12484"/>
        <dbReference type="ChEBI" id="CHEBI:15377"/>
        <dbReference type="ChEBI" id="CHEBI:18254"/>
        <dbReference type="ChEBI" id="CHEBI:43474"/>
        <dbReference type="ChEBI" id="CHEBI:58043"/>
        <dbReference type="EC" id="3.1.3.5"/>
    </reaction>
</comment>
<comment type="cofactor">
    <cofactor evidence="1">
        <name>a divalent metal cation</name>
        <dbReference type="ChEBI" id="CHEBI:60240"/>
    </cofactor>
    <text evidence="1">Binds 1 divalent metal cation per subunit.</text>
</comment>
<comment type="subcellular location">
    <subcellularLocation>
        <location evidence="1">Cytoplasm</location>
    </subcellularLocation>
</comment>
<comment type="similarity">
    <text evidence="1">Belongs to the SurE nucleotidase family.</text>
</comment>
<feature type="chain" id="PRO_0000111807" description="5'-nucleotidase SurE">
    <location>
        <begin position="1"/>
        <end position="258"/>
    </location>
</feature>
<feature type="binding site" evidence="1">
    <location>
        <position position="16"/>
    </location>
    <ligand>
        <name>a divalent metal cation</name>
        <dbReference type="ChEBI" id="CHEBI:60240"/>
    </ligand>
</feature>
<feature type="binding site" evidence="1">
    <location>
        <position position="17"/>
    </location>
    <ligand>
        <name>a divalent metal cation</name>
        <dbReference type="ChEBI" id="CHEBI:60240"/>
    </ligand>
</feature>
<feature type="binding site" evidence="1">
    <location>
        <position position="47"/>
    </location>
    <ligand>
        <name>a divalent metal cation</name>
        <dbReference type="ChEBI" id="CHEBI:60240"/>
    </ligand>
</feature>
<feature type="binding site" evidence="1">
    <location>
        <position position="99"/>
    </location>
    <ligand>
        <name>a divalent metal cation</name>
        <dbReference type="ChEBI" id="CHEBI:60240"/>
    </ligand>
</feature>
<feature type="strand" evidence="2">
    <location>
        <begin position="10"/>
        <end position="14"/>
    </location>
</feature>
<feature type="helix" evidence="2">
    <location>
        <begin position="22"/>
        <end position="31"/>
    </location>
</feature>
<feature type="turn" evidence="2">
    <location>
        <begin position="32"/>
        <end position="34"/>
    </location>
</feature>
<feature type="strand" evidence="2">
    <location>
        <begin position="35"/>
        <end position="44"/>
    </location>
</feature>
<feature type="strand" evidence="2">
    <location>
        <begin position="59"/>
        <end position="63"/>
    </location>
</feature>
<feature type="strand" evidence="2">
    <location>
        <begin position="69"/>
        <end position="73"/>
    </location>
</feature>
<feature type="helix" evidence="2">
    <location>
        <begin position="75"/>
        <end position="82"/>
    </location>
</feature>
<feature type="turn" evidence="2">
    <location>
        <begin position="83"/>
        <end position="86"/>
    </location>
</feature>
<feature type="strand" evidence="2">
    <location>
        <begin position="87"/>
        <end position="89"/>
    </location>
</feature>
<feature type="strand" evidence="2">
    <location>
        <begin position="92"/>
        <end position="101"/>
    </location>
</feature>
<feature type="helix" evidence="2">
    <location>
        <begin position="105"/>
        <end position="109"/>
    </location>
</feature>
<feature type="helix" evidence="2">
    <location>
        <begin position="112"/>
        <end position="119"/>
    </location>
</feature>
<feature type="turn" evidence="2">
    <location>
        <begin position="120"/>
        <end position="123"/>
    </location>
</feature>
<feature type="strand" evidence="2">
    <location>
        <begin position="127"/>
        <end position="132"/>
    </location>
</feature>
<feature type="strand" evidence="2">
    <location>
        <begin position="134"/>
        <end position="136"/>
    </location>
</feature>
<feature type="helix" evidence="2">
    <location>
        <begin position="140"/>
        <end position="156"/>
    </location>
</feature>
<feature type="strand" evidence="2">
    <location>
        <begin position="164"/>
        <end position="169"/>
    </location>
</feature>
<feature type="helix" evidence="2">
    <location>
        <begin position="174"/>
        <end position="176"/>
    </location>
</feature>
<feature type="strand" evidence="2">
    <location>
        <begin position="179"/>
        <end position="182"/>
    </location>
</feature>
<feature type="strand" evidence="2">
    <location>
        <begin position="195"/>
        <end position="198"/>
    </location>
</feature>
<feature type="strand" evidence="2">
    <location>
        <begin position="204"/>
        <end position="207"/>
    </location>
</feature>
<feature type="strand" evidence="2">
    <location>
        <begin position="214"/>
        <end position="216"/>
    </location>
</feature>
<feature type="helix" evidence="2">
    <location>
        <begin position="222"/>
        <end position="227"/>
    </location>
</feature>
<feature type="strand" evidence="2">
    <location>
        <begin position="230"/>
        <end position="236"/>
    </location>
</feature>
<feature type="helix" evidence="2">
    <location>
        <begin position="243"/>
        <end position="245"/>
    </location>
</feature>
<feature type="helix" evidence="2">
    <location>
        <begin position="246"/>
        <end position="256"/>
    </location>
</feature>
<accession>Q9KI21</accession>
<evidence type="ECO:0000255" key="1">
    <source>
        <dbReference type="HAMAP-Rule" id="MF_00060"/>
    </source>
</evidence>
<evidence type="ECO:0007829" key="2">
    <source>
        <dbReference type="PDB" id="3TY2"/>
    </source>
</evidence>
<gene>
    <name evidence="1" type="primary">surE</name>
    <name type="ordered locus">CBU_1671</name>
</gene>
<reference key="1">
    <citation type="journal article" date="2001" name="Infect. Immun.">
        <title>Characterization of a stress-induced alternate sigma factor, RpoS, of Coxiella burnetii and its expression during the development cycle.</title>
        <authorList>
            <person name="Seshadri R."/>
            <person name="Samuel J.E."/>
        </authorList>
    </citation>
    <scope>NUCLEOTIDE SEQUENCE [GENOMIC DNA]</scope>
    <source>
        <strain>Nine Mile phase I</strain>
    </source>
</reference>
<reference key="2">
    <citation type="journal article" date="2003" name="Proc. Natl. Acad. Sci. U.S.A.">
        <title>Complete genome sequence of the Q-fever pathogen, Coxiella burnetii.</title>
        <authorList>
            <person name="Seshadri R."/>
            <person name="Paulsen I.T."/>
            <person name="Eisen J.A."/>
            <person name="Read T.D."/>
            <person name="Nelson K.E."/>
            <person name="Nelson W.C."/>
            <person name="Ward N.L."/>
            <person name="Tettelin H."/>
            <person name="Davidsen T.M."/>
            <person name="Beanan M.J."/>
            <person name="DeBoy R.T."/>
            <person name="Daugherty S.C."/>
            <person name="Brinkac L.M."/>
            <person name="Madupu R."/>
            <person name="Dodson R.J."/>
            <person name="Khouri H.M."/>
            <person name="Lee K.H."/>
            <person name="Carty H.A."/>
            <person name="Scanlan D."/>
            <person name="Heinzen R.A."/>
            <person name="Thompson H.A."/>
            <person name="Samuel J.E."/>
            <person name="Fraser C.M."/>
            <person name="Heidelberg J.F."/>
        </authorList>
    </citation>
    <scope>NUCLEOTIDE SEQUENCE [LARGE SCALE GENOMIC DNA]</scope>
    <source>
        <strain>RSA 493 / Nine Mile phase I</strain>
    </source>
</reference>
<keyword id="KW-0002">3D-structure</keyword>
<keyword id="KW-0963">Cytoplasm</keyword>
<keyword id="KW-0378">Hydrolase</keyword>
<keyword id="KW-0479">Metal-binding</keyword>
<keyword id="KW-0547">Nucleotide-binding</keyword>
<keyword id="KW-1185">Reference proteome</keyword>
<dbReference type="EC" id="3.1.3.5" evidence="1"/>
<dbReference type="EMBL" id="AF244357">
    <property type="protein sequence ID" value="AAF73516.1"/>
    <property type="molecule type" value="Genomic_DNA"/>
</dbReference>
<dbReference type="EMBL" id="AE016828">
    <property type="protein sequence ID" value="AAO91167.2"/>
    <property type="molecule type" value="Genomic_DNA"/>
</dbReference>
<dbReference type="RefSeq" id="NP_820653.2">
    <property type="nucleotide sequence ID" value="NC_002971.4"/>
</dbReference>
<dbReference type="RefSeq" id="WP_005770587.1">
    <property type="nucleotide sequence ID" value="NZ_CCYB01000011.1"/>
</dbReference>
<dbReference type="PDB" id="3TY2">
    <property type="method" value="X-ray"/>
    <property type="resolution" value="1.88 A"/>
    <property type="chains" value="A/B=1-258"/>
</dbReference>
<dbReference type="PDBsum" id="3TY2"/>
<dbReference type="SMR" id="Q9KI21"/>
<dbReference type="STRING" id="227377.CBU_1671"/>
<dbReference type="EnsemblBacteria" id="AAO91167">
    <property type="protein sequence ID" value="AAO91167"/>
    <property type="gene ID" value="CBU_1671"/>
</dbReference>
<dbReference type="GeneID" id="1209582"/>
<dbReference type="KEGG" id="cbu:CBU_1671"/>
<dbReference type="PATRIC" id="fig|227377.7.peg.1661"/>
<dbReference type="eggNOG" id="COG0496">
    <property type="taxonomic scope" value="Bacteria"/>
</dbReference>
<dbReference type="HOGENOM" id="CLU_045192_1_2_6"/>
<dbReference type="OrthoDB" id="9780815at2"/>
<dbReference type="EvolutionaryTrace" id="Q9KI21"/>
<dbReference type="Proteomes" id="UP000002671">
    <property type="component" value="Chromosome"/>
</dbReference>
<dbReference type="GO" id="GO:0005737">
    <property type="term" value="C:cytoplasm"/>
    <property type="evidence" value="ECO:0007669"/>
    <property type="project" value="UniProtKB-SubCell"/>
</dbReference>
<dbReference type="GO" id="GO:0008254">
    <property type="term" value="F:3'-nucleotidase activity"/>
    <property type="evidence" value="ECO:0000318"/>
    <property type="project" value="GO_Central"/>
</dbReference>
<dbReference type="GO" id="GO:0008253">
    <property type="term" value="F:5'-nucleotidase activity"/>
    <property type="evidence" value="ECO:0000318"/>
    <property type="project" value="GO_Central"/>
</dbReference>
<dbReference type="GO" id="GO:0004309">
    <property type="term" value="F:exopolyphosphatase activity"/>
    <property type="evidence" value="ECO:0000318"/>
    <property type="project" value="GO_Central"/>
</dbReference>
<dbReference type="GO" id="GO:0046872">
    <property type="term" value="F:metal ion binding"/>
    <property type="evidence" value="ECO:0007669"/>
    <property type="project" value="UniProtKB-UniRule"/>
</dbReference>
<dbReference type="GO" id="GO:0000166">
    <property type="term" value="F:nucleotide binding"/>
    <property type="evidence" value="ECO:0007669"/>
    <property type="project" value="UniProtKB-KW"/>
</dbReference>
<dbReference type="FunFam" id="3.40.1210.10:FF:000001">
    <property type="entry name" value="5'/3'-nucleotidase SurE"/>
    <property type="match status" value="1"/>
</dbReference>
<dbReference type="Gene3D" id="3.40.1210.10">
    <property type="entry name" value="Survival protein SurE-like phosphatase/nucleotidase"/>
    <property type="match status" value="1"/>
</dbReference>
<dbReference type="HAMAP" id="MF_00060">
    <property type="entry name" value="SurE"/>
    <property type="match status" value="1"/>
</dbReference>
<dbReference type="InterPro" id="IPR030048">
    <property type="entry name" value="SurE"/>
</dbReference>
<dbReference type="InterPro" id="IPR002828">
    <property type="entry name" value="SurE-like_Pase/nucleotidase"/>
</dbReference>
<dbReference type="InterPro" id="IPR036523">
    <property type="entry name" value="SurE-like_sf"/>
</dbReference>
<dbReference type="NCBIfam" id="NF001489">
    <property type="entry name" value="PRK00346.1-3"/>
    <property type="match status" value="1"/>
</dbReference>
<dbReference type="NCBIfam" id="NF001490">
    <property type="entry name" value="PRK00346.1-4"/>
    <property type="match status" value="1"/>
</dbReference>
<dbReference type="NCBIfam" id="TIGR00087">
    <property type="entry name" value="surE"/>
    <property type="match status" value="1"/>
</dbReference>
<dbReference type="PANTHER" id="PTHR30457">
    <property type="entry name" value="5'-NUCLEOTIDASE SURE"/>
    <property type="match status" value="1"/>
</dbReference>
<dbReference type="PANTHER" id="PTHR30457:SF12">
    <property type="entry name" value="5'_3'-NUCLEOTIDASE SURE"/>
    <property type="match status" value="1"/>
</dbReference>
<dbReference type="Pfam" id="PF01975">
    <property type="entry name" value="SurE"/>
    <property type="match status" value="1"/>
</dbReference>
<dbReference type="SUPFAM" id="SSF64167">
    <property type="entry name" value="SurE-like"/>
    <property type="match status" value="1"/>
</dbReference>
<organism>
    <name type="scientific">Coxiella burnetii (strain RSA 493 / Nine Mile phase I)</name>
    <dbReference type="NCBI Taxonomy" id="227377"/>
    <lineage>
        <taxon>Bacteria</taxon>
        <taxon>Pseudomonadati</taxon>
        <taxon>Pseudomonadota</taxon>
        <taxon>Gammaproteobacteria</taxon>
        <taxon>Legionellales</taxon>
        <taxon>Coxiellaceae</taxon>
        <taxon>Coxiella</taxon>
    </lineage>
</organism>
<name>SURE_COXBU</name>